<proteinExistence type="evidence at protein level"/>
<accession>P02770</accession>
<accession>P11382</accession>
<accession>Q5U3X3</accession>
<protein>
    <recommendedName>
        <fullName>Albumin</fullName>
    </recommendedName>
</protein>
<sequence length="608" mass="68731">MKWVTFLLLLFISGSAFSRGVFRREAHKSEIAHRFKDLGEQHFKGLVLIAFSQYLQKCPYEEHIKLVQEVTDFAKTCVADENAENCDKSIHTLFGDKLCAIPKLRDNYGELADCCAKQEPERNECFLQHKDDNPNLPPFQRPEAEAMCTSFQENPTSFLGHYLHEVARRHPYFYAPELLYYAEKYNEVLTQCCTESDKAACLTPKLDAVKEKALVAAVRQRMKCSSMQRFGERAFKAWAVARMSQRFPNAEFAEITKLATDVTKINKECCHGDLLECADDRAELAKYMCENQATISSKLQACCDKPVLQKSQCLAEIEHDNIPADLPSIAADFVEDKEVCKNYAEAKDVFLGTFLYEYSRRHPDYSVSLLLRLAKKYEATLEKCCAEGDPPACYGTVLAEFQPLVEEPKNLVKTNCELYEKLGEYGFQNAVLVRYTQKAPQVSTPTLVEAARNLGRVGTKCCTLPEAQRLPCVEDYLSAILNRLCVLHEKTPVSEKVTKCCSGSLVERRPCFSALTVDETYVPKEFKAETFTFHSDICTLPDKEKQIKKQTALAELVKHKPKATEDQLKTVMGDFAQFVDKCCKAADKDNCFATEGPNLVARSKEALA</sequence>
<dbReference type="EMBL" id="V01222">
    <property type="protein sequence ID" value="CAA24532.1"/>
    <property type="molecule type" value="mRNA"/>
</dbReference>
<dbReference type="EMBL" id="BC085359">
    <property type="protein sequence ID" value="AAH85359.1"/>
    <property type="molecule type" value="mRNA"/>
</dbReference>
<dbReference type="PIR" id="A93872">
    <property type="entry name" value="ABRTS"/>
</dbReference>
<dbReference type="RefSeq" id="NP_599153.2">
    <property type="nucleotide sequence ID" value="NM_134326.2"/>
</dbReference>
<dbReference type="SMR" id="P02770"/>
<dbReference type="BioGRID" id="246376">
    <property type="interactions" value="2"/>
</dbReference>
<dbReference type="CORUM" id="P02770"/>
<dbReference type="FunCoup" id="P02770">
    <property type="interactions" value="272"/>
</dbReference>
<dbReference type="IntAct" id="P02770">
    <property type="interactions" value="3"/>
</dbReference>
<dbReference type="STRING" id="10116.ENSRNOP00000003921"/>
<dbReference type="BindingDB" id="P02770"/>
<dbReference type="ChEMBL" id="CHEMBL4817"/>
<dbReference type="Allergome" id="756">
    <property type="allergen name" value="Rat n 4"/>
</dbReference>
<dbReference type="CarbonylDB" id="P02770"/>
<dbReference type="iPTMnet" id="P02770"/>
<dbReference type="PhosphoSitePlus" id="P02770"/>
<dbReference type="SwissPalm" id="P02770"/>
<dbReference type="jPOST" id="P02770"/>
<dbReference type="PaxDb" id="10116-ENSRNOP00000003921"/>
<dbReference type="ABCD" id="P02770">
    <property type="antibodies" value="46 sequenced antibodies"/>
</dbReference>
<dbReference type="GeneID" id="24186"/>
<dbReference type="KEGG" id="rno:24186"/>
<dbReference type="UCSC" id="RGD:2085">
    <property type="organism name" value="rat"/>
</dbReference>
<dbReference type="AGR" id="RGD:2085"/>
<dbReference type="CTD" id="213"/>
<dbReference type="RGD" id="2085">
    <property type="gene designation" value="Alb"/>
</dbReference>
<dbReference type="eggNOG" id="ENOG502R7EA">
    <property type="taxonomic scope" value="Eukaryota"/>
</dbReference>
<dbReference type="InParanoid" id="P02770"/>
<dbReference type="OrthoDB" id="59217at9989"/>
<dbReference type="PhylomeDB" id="P02770"/>
<dbReference type="TreeFam" id="TF335561"/>
<dbReference type="Reactome" id="R-RNO-114608">
    <property type="pathway name" value="Platelet degranulation"/>
</dbReference>
<dbReference type="Reactome" id="R-RNO-159418">
    <property type="pathway name" value="Recycling of bile acids and salts"/>
</dbReference>
<dbReference type="Reactome" id="R-RNO-189451">
    <property type="pathway name" value="Heme biosynthesis"/>
</dbReference>
<dbReference type="Reactome" id="R-RNO-189483">
    <property type="pathway name" value="Heme degradation"/>
</dbReference>
<dbReference type="Reactome" id="R-RNO-2168880">
    <property type="pathway name" value="Scavenging of heme from plasma"/>
</dbReference>
<dbReference type="Reactome" id="R-RNO-381426">
    <property type="pathway name" value="Regulation of Insulin-like Growth Factor (IGF) transport and uptake by Insulin-like Growth Factor Binding Proteins (IGFBPs)"/>
</dbReference>
<dbReference type="Reactome" id="R-RNO-8957275">
    <property type="pathway name" value="Post-translational protein phosphorylation"/>
</dbReference>
<dbReference type="Reactome" id="R-RNO-8964058">
    <property type="pathway name" value="HDL remodeling"/>
</dbReference>
<dbReference type="Reactome" id="R-RNO-9707564">
    <property type="pathway name" value="Cytoprotection by HMOX1"/>
</dbReference>
<dbReference type="Reactome" id="R-RNO-9749641">
    <property type="pathway name" value="Aspirin ADME"/>
</dbReference>
<dbReference type="Reactome" id="R-RNO-9757110">
    <property type="pathway name" value="Prednisone ADME"/>
</dbReference>
<dbReference type="Reactome" id="R-RNO-9793528">
    <property type="pathway name" value="Ciprofloxacin ADME"/>
</dbReference>
<dbReference type="SABIO-RK" id="P02770"/>
<dbReference type="PRO" id="PR:P02770"/>
<dbReference type="Proteomes" id="UP000002494">
    <property type="component" value="Unplaced"/>
</dbReference>
<dbReference type="GO" id="GO:0005604">
    <property type="term" value="C:basement membrane"/>
    <property type="evidence" value="ECO:0000314"/>
    <property type="project" value="RGD"/>
</dbReference>
<dbReference type="GO" id="GO:0005737">
    <property type="term" value="C:cytoplasm"/>
    <property type="evidence" value="ECO:0000266"/>
    <property type="project" value="RGD"/>
</dbReference>
<dbReference type="GO" id="GO:0070062">
    <property type="term" value="C:extracellular exosome"/>
    <property type="evidence" value="ECO:0000266"/>
    <property type="project" value="RGD"/>
</dbReference>
<dbReference type="GO" id="GO:0005576">
    <property type="term" value="C:extracellular region"/>
    <property type="evidence" value="ECO:0000266"/>
    <property type="project" value="RGD"/>
</dbReference>
<dbReference type="GO" id="GO:0005615">
    <property type="term" value="C:extracellular space"/>
    <property type="evidence" value="ECO:0000314"/>
    <property type="project" value="RGD"/>
</dbReference>
<dbReference type="GO" id="GO:0032991">
    <property type="term" value="C:protein-containing complex"/>
    <property type="evidence" value="ECO:0000250"/>
    <property type="project" value="UniProtKB"/>
</dbReference>
<dbReference type="GO" id="GO:0003677">
    <property type="term" value="F:DNA binding"/>
    <property type="evidence" value="ECO:0000250"/>
    <property type="project" value="UniProtKB"/>
</dbReference>
<dbReference type="GO" id="GO:1903981">
    <property type="term" value="F:enterobactin binding"/>
    <property type="evidence" value="ECO:0000250"/>
    <property type="project" value="UniProtKB"/>
</dbReference>
<dbReference type="GO" id="GO:0019899">
    <property type="term" value="F:enzyme binding"/>
    <property type="evidence" value="ECO:0000353"/>
    <property type="project" value="RGD"/>
</dbReference>
<dbReference type="GO" id="GO:0140272">
    <property type="term" value="F:exogenous protein binding"/>
    <property type="evidence" value="ECO:0000266"/>
    <property type="project" value="RGD"/>
</dbReference>
<dbReference type="GO" id="GO:0005504">
    <property type="term" value="F:fatty acid binding"/>
    <property type="evidence" value="ECO:0000314"/>
    <property type="project" value="RGD"/>
</dbReference>
<dbReference type="GO" id="GO:0042802">
    <property type="term" value="F:identical protein binding"/>
    <property type="evidence" value="ECO:0000266"/>
    <property type="project" value="RGD"/>
</dbReference>
<dbReference type="GO" id="GO:0072341">
    <property type="term" value="F:modified amino acid binding"/>
    <property type="evidence" value="ECO:0000353"/>
    <property type="project" value="RGD"/>
</dbReference>
<dbReference type="GO" id="GO:0051087">
    <property type="term" value="F:protein-folding chaperone binding"/>
    <property type="evidence" value="ECO:0000266"/>
    <property type="project" value="RGD"/>
</dbReference>
<dbReference type="GO" id="GO:0030170">
    <property type="term" value="F:pyridoxal phosphate binding"/>
    <property type="evidence" value="ECO:0000250"/>
    <property type="project" value="UniProtKB"/>
</dbReference>
<dbReference type="GO" id="GO:0036094">
    <property type="term" value="F:small molecule binding"/>
    <property type="evidence" value="ECO:0000266"/>
    <property type="project" value="RGD"/>
</dbReference>
<dbReference type="GO" id="GO:0015643">
    <property type="term" value="F:toxic substance binding"/>
    <property type="evidence" value="ECO:0000250"/>
    <property type="project" value="UniProtKB"/>
</dbReference>
<dbReference type="GO" id="GO:0008270">
    <property type="term" value="F:zinc ion binding"/>
    <property type="evidence" value="ECO:0000314"/>
    <property type="project" value="RGD"/>
</dbReference>
<dbReference type="GO" id="GO:0072732">
    <property type="term" value="P:cellular response to calcium ion starvation"/>
    <property type="evidence" value="ECO:0000250"/>
    <property type="project" value="UniProtKB"/>
</dbReference>
<dbReference type="GO" id="GO:0009267">
    <property type="term" value="P:cellular response to starvation"/>
    <property type="evidence" value="ECO:0000250"/>
    <property type="project" value="UniProtKB"/>
</dbReference>
<dbReference type="GO" id="GO:0051902">
    <property type="term" value="P:negative regulation of mitochondrial depolarization"/>
    <property type="evidence" value="ECO:0000250"/>
    <property type="project" value="UniProtKB"/>
</dbReference>
<dbReference type="GO" id="GO:0046010">
    <property type="term" value="P:positive regulation of circadian sleep/wake cycle, non-REM sleep"/>
    <property type="evidence" value="ECO:0000314"/>
    <property type="project" value="RGD"/>
</dbReference>
<dbReference type="GO" id="GO:1904614">
    <property type="term" value="P:response to biphenyl"/>
    <property type="evidence" value="ECO:0000270"/>
    <property type="project" value="RGD"/>
</dbReference>
<dbReference type="GO" id="GO:0046689">
    <property type="term" value="P:response to mercury ion"/>
    <property type="evidence" value="ECO:0000270"/>
    <property type="project" value="RGD"/>
</dbReference>
<dbReference type="GO" id="GO:0007584">
    <property type="term" value="P:response to nutrient"/>
    <property type="evidence" value="ECO:0000270"/>
    <property type="project" value="RGD"/>
</dbReference>
<dbReference type="GO" id="GO:0070541">
    <property type="term" value="P:response to platinum ion"/>
    <property type="evidence" value="ECO:0000270"/>
    <property type="project" value="RGD"/>
</dbReference>
<dbReference type="GO" id="GO:0042311">
    <property type="term" value="P:vasodilation"/>
    <property type="evidence" value="ECO:0000303"/>
    <property type="project" value="RGD"/>
</dbReference>
<dbReference type="CDD" id="cd00015">
    <property type="entry name" value="ALBUMIN"/>
    <property type="match status" value="3"/>
</dbReference>
<dbReference type="FunFam" id="1.10.246.10:FF:000001">
    <property type="entry name" value="Serum albumin"/>
    <property type="match status" value="2"/>
</dbReference>
<dbReference type="FunFam" id="1.10.246.10:FF:000002">
    <property type="entry name" value="Serum albumin"/>
    <property type="match status" value="2"/>
</dbReference>
<dbReference type="FunFam" id="1.10.246.10:FF:000003">
    <property type="entry name" value="Serum albumin"/>
    <property type="match status" value="1"/>
</dbReference>
<dbReference type="Gene3D" id="1.10.246.10">
    <property type="match status" value="6"/>
</dbReference>
<dbReference type="InterPro" id="IPR000264">
    <property type="entry name" value="ALB/AFP/VDB"/>
</dbReference>
<dbReference type="InterPro" id="IPR020858">
    <property type="entry name" value="Serum_albumin-like"/>
</dbReference>
<dbReference type="InterPro" id="IPR021177">
    <property type="entry name" value="Serum_albumin/AFP/Afamin"/>
</dbReference>
<dbReference type="InterPro" id="IPR020857">
    <property type="entry name" value="Serum_albumin_CS"/>
</dbReference>
<dbReference type="InterPro" id="IPR014760">
    <property type="entry name" value="Serum_albumin_N"/>
</dbReference>
<dbReference type="PANTHER" id="PTHR11385:SF15">
    <property type="entry name" value="ALBUMIN"/>
    <property type="match status" value="1"/>
</dbReference>
<dbReference type="PANTHER" id="PTHR11385">
    <property type="entry name" value="SERUM ALBUMIN-RELATED"/>
    <property type="match status" value="1"/>
</dbReference>
<dbReference type="Pfam" id="PF00273">
    <property type="entry name" value="Serum_albumin"/>
    <property type="match status" value="3"/>
</dbReference>
<dbReference type="PIRSF" id="PIRSF002520">
    <property type="entry name" value="Serum_albumin_subgroup"/>
    <property type="match status" value="1"/>
</dbReference>
<dbReference type="PRINTS" id="PR00802">
    <property type="entry name" value="SERUMALBUMIN"/>
</dbReference>
<dbReference type="SMART" id="SM00103">
    <property type="entry name" value="ALBUMIN"/>
    <property type="match status" value="3"/>
</dbReference>
<dbReference type="SUPFAM" id="SSF48552">
    <property type="entry name" value="Serum albumin-like"/>
    <property type="match status" value="3"/>
</dbReference>
<dbReference type="PROSITE" id="PS00212">
    <property type="entry name" value="ALBUMIN_1"/>
    <property type="match status" value="3"/>
</dbReference>
<dbReference type="PROSITE" id="PS51438">
    <property type="entry name" value="ALBUMIN_2"/>
    <property type="match status" value="3"/>
</dbReference>
<keyword id="KW-0106">Calcium</keyword>
<keyword id="KW-0165">Cleavage on pair of basic residues</keyword>
<keyword id="KW-0186">Copper</keyword>
<keyword id="KW-0903">Direct protein sequencing</keyword>
<keyword id="KW-1015">Disulfide bond</keyword>
<keyword id="KW-0446">Lipid-binding</keyword>
<keyword id="KW-0479">Metal-binding</keyword>
<keyword id="KW-0488">Methylation</keyword>
<keyword id="KW-0597">Phosphoprotein</keyword>
<keyword id="KW-1185">Reference proteome</keyword>
<keyword id="KW-0677">Repeat</keyword>
<keyword id="KW-0964">Secreted</keyword>
<keyword id="KW-0732">Signal</keyword>
<keyword id="KW-0862">Zinc</keyword>
<reference key="1">
    <citation type="journal article" date="1981" name="Proc. Natl. Acad. Sci. U.S.A.">
        <title>Nucleotide sequence of cloned rat serum albumin messenger RNA.</title>
        <authorList>
            <person name="Sargent T.D."/>
            <person name="Yang M."/>
            <person name="Bonner J."/>
        </authorList>
    </citation>
    <scope>NUCLEOTIDE SEQUENCE [MRNA]</scope>
</reference>
<reference key="2">
    <citation type="journal article" date="2004" name="Genome Res.">
        <title>The status, quality, and expansion of the NIH full-length cDNA project: the Mammalian Gene Collection (MGC).</title>
        <authorList>
            <consortium name="The MGC Project Team"/>
        </authorList>
    </citation>
    <scope>NUCLEOTIDE SEQUENCE [LARGE SCALE MRNA]</scope>
    <scope>VARIANT LEU-262</scope>
    <source>
        <tissue>Ovary</tissue>
    </source>
</reference>
<reference key="3">
    <citation type="journal article" date="1977" name="J. Biol. Chem.">
        <title>Rat liver pre-proalbumin: complete amino acid sequence of the pre-piece. Analysis of the direct translation product of albumin messenger RNA.</title>
        <authorList>
            <person name="Strauss A.W."/>
            <person name="Bennett C.D."/>
            <person name="Donohue A.M."/>
            <person name="Rodkey J.A."/>
            <person name="Alberts A.W."/>
        </authorList>
    </citation>
    <scope>PROTEIN SEQUENCE OF 1-38 (PRECURSOR PROTEIN)</scope>
    <scope>PROTEOLYTIC PROCESSING</scope>
    <scope>IDENTIFICATION OF PROPEPTIDE CLEAVAGE SITE</scope>
</reference>
<reference key="4">
    <citation type="journal article" date="1980" name="J. Biol. Chem.">
        <title>The biosynthesis of rat serum albumin. Composition and properties of the intracellular precursor, proalbumin.</title>
        <authorList>
            <person name="Peters T. Jr."/>
            <person name="Reed R.G."/>
        </authorList>
    </citation>
    <scope>PROTEIN SEQUENCE OF 19-27 AND 606-608</scope>
    <source>
        <tissue>Liver</tissue>
    </source>
</reference>
<reference key="5">
    <citation type="journal article" date="1978" name="J. Biochem.">
        <title>Amino acid sequences of fragments I and II obtained by cyanogen bromide cleavage of rat serum albumin.</title>
        <authorList>
            <person name="Isemura S."/>
            <person name="Ikenaka T."/>
        </authorList>
    </citation>
    <scope>PROTEIN SEQUENCE OF 25-222</scope>
</reference>
<reference key="6">
    <citation type="journal article" date="1987" name="J. Biol. Chem.">
        <title>Structure of a biologically active neurotensin-related peptide obtained from pepsin-treated albumin(s).</title>
        <authorList>
            <person name="Carraway R.E."/>
            <person name="Mitra S.P."/>
            <person name="Cochrane D.E."/>
        </authorList>
    </citation>
    <scope>PROTEIN SEQUENCE OF 166-174</scope>
    <source>
        <tissue>Plasma</tissue>
    </source>
</reference>
<reference key="7">
    <citation type="submission" date="2007-07" db="UniProtKB">
        <authorList>
            <person name="Lubec G."/>
            <person name="Afjehi-Sadat L."/>
            <person name="Chen W.-Q."/>
            <person name="Kang S.U."/>
        </authorList>
    </citation>
    <scope>PROTEIN SEQUENCE OF 35-57; 66-75; 89-97; 168-181; 247-264; 287-298; 361-372; 376-383; 414-434; 439-452; 470-483; 509-524; 528-545; 570-581 AND 585-602</scope>
    <scope>IDENTIFICATION BY MASS SPECTROMETRY</scope>
    <source>
        <strain>Sprague-Dawley</strain>
        <tissue>Brain</tissue>
        <tissue>Hippocampus</tissue>
        <tissue>Spinal cord</tissue>
    </source>
</reference>
<reference key="8">
    <citation type="journal article" date="1976" name="J. Biochem.">
        <title>Fragmentation of rat serum albumin by cyanogen bromide cleavage and the amino acid sequences of four fragments.</title>
        <authorList>
            <person name="Isemura S."/>
            <person name="Ikenaka T."/>
        </authorList>
    </citation>
    <scope>PROTEIN SEQUENCE OF 223-288 AND 572-608</scope>
</reference>
<reference key="9">
    <citation type="journal article" date="1978" name="Cancer Res.">
        <title>Copper(II)-binding ability of human alpha-fetoprotein.</title>
        <authorList>
            <person name="Aoyagi Y."/>
            <person name="Ikenaka T."/>
            <person name="Ichida F."/>
        </authorList>
    </citation>
    <scope>COPPER-BINDING</scope>
</reference>
<reference key="10">
    <citation type="journal article" date="2012" name="Nat. Commun.">
        <title>Quantitative maps of protein phosphorylation sites across 14 different rat organs and tissues.</title>
        <authorList>
            <person name="Lundby A."/>
            <person name="Secher A."/>
            <person name="Lage K."/>
            <person name="Nordsborg N.B."/>
            <person name="Dmytriyev A."/>
            <person name="Lundby C."/>
            <person name="Olsen J.V."/>
        </authorList>
    </citation>
    <scope>PHOSPHORYLATION [LARGE SCALE ANALYSIS] AT SER-443 AND THR-570</scope>
    <scope>IDENTIFICATION BY MASS SPECTROMETRY [LARGE SCALE ANALYSIS]</scope>
</reference>
<organism>
    <name type="scientific">Rattus norvegicus</name>
    <name type="common">Rat</name>
    <dbReference type="NCBI Taxonomy" id="10116"/>
    <lineage>
        <taxon>Eukaryota</taxon>
        <taxon>Metazoa</taxon>
        <taxon>Chordata</taxon>
        <taxon>Craniata</taxon>
        <taxon>Vertebrata</taxon>
        <taxon>Euteleostomi</taxon>
        <taxon>Mammalia</taxon>
        <taxon>Eutheria</taxon>
        <taxon>Euarchontoglires</taxon>
        <taxon>Glires</taxon>
        <taxon>Rodentia</taxon>
        <taxon>Myomorpha</taxon>
        <taxon>Muroidea</taxon>
        <taxon>Muridae</taxon>
        <taxon>Murinae</taxon>
        <taxon>Rattus</taxon>
    </lineage>
</organism>
<gene>
    <name type="primary">Alb</name>
</gene>
<name>ALBU_RAT</name>
<feature type="signal peptide" evidence="7">
    <location>
        <begin position="1"/>
        <end position="18"/>
    </location>
</feature>
<feature type="propeptide" id="PRO_0000001079" evidence="7">
    <location>
        <begin position="19"/>
        <end position="24"/>
    </location>
</feature>
<feature type="chain" id="PRO_0000001080" description="Albumin">
    <location>
        <begin position="25"/>
        <end position="608"/>
    </location>
</feature>
<feature type="domain" description="Albumin 1" evidence="4">
    <location>
        <begin position="19"/>
        <end position="211"/>
    </location>
</feature>
<feature type="domain" description="Albumin 2" evidence="4">
    <location>
        <begin position="212"/>
        <end position="403"/>
    </location>
</feature>
<feature type="domain" description="Albumin 3" evidence="4">
    <location>
        <begin position="404"/>
        <end position="601"/>
    </location>
</feature>
<feature type="binding site" evidence="6">
    <location>
        <position position="27"/>
    </location>
    <ligand>
        <name>Cu cation</name>
        <dbReference type="ChEBI" id="CHEBI:23378"/>
    </ligand>
</feature>
<feature type="binding site" evidence="2">
    <location>
        <position position="30"/>
    </location>
    <ligand>
        <name>Ca(2+)</name>
        <dbReference type="ChEBI" id="CHEBI:29108"/>
        <label>1</label>
    </ligand>
</feature>
<feature type="binding site" evidence="2">
    <location>
        <position position="37"/>
    </location>
    <ligand>
        <name>Ca(2+)</name>
        <dbReference type="ChEBI" id="CHEBI:29108"/>
        <label>2</label>
    </ligand>
</feature>
<feature type="binding site" evidence="1">
    <location>
        <position position="91"/>
    </location>
    <ligand>
        <name>Zn(2+)</name>
        <dbReference type="ChEBI" id="CHEBI:29105"/>
    </ligand>
</feature>
<feature type="binding site" evidence="2">
    <location>
        <position position="268"/>
    </location>
    <ligand>
        <name>Ca(2+)</name>
        <dbReference type="ChEBI" id="CHEBI:29108"/>
        <label>1</label>
    </ligand>
</feature>
<feature type="binding site" evidence="1">
    <location>
        <position position="271"/>
    </location>
    <ligand>
        <name>Zn(2+)</name>
        <dbReference type="ChEBI" id="CHEBI:29105"/>
    </ligand>
</feature>
<feature type="binding site" evidence="2">
    <location>
        <position position="273"/>
    </location>
    <ligand>
        <name>Ca(2+)</name>
        <dbReference type="ChEBI" id="CHEBI:29108"/>
        <label>1</label>
    </ligand>
</feature>
<feature type="binding site" evidence="1">
    <location>
        <position position="273"/>
    </location>
    <ligand>
        <name>Zn(2+)</name>
        <dbReference type="ChEBI" id="CHEBI:29105"/>
    </ligand>
</feature>
<feature type="binding site" evidence="2">
    <location>
        <position position="276"/>
    </location>
    <ligand>
        <name>Ca(2+)</name>
        <dbReference type="ChEBI" id="CHEBI:29108"/>
        <label>1</label>
    </ligand>
</feature>
<feature type="binding site" evidence="2">
    <location>
        <position position="279"/>
    </location>
    <ligand>
        <name>Ca(2+)</name>
        <dbReference type="ChEBI" id="CHEBI:29108"/>
        <label>2</label>
    </ligand>
</feature>
<feature type="modified residue" description="Phosphoserine" evidence="1">
    <location>
        <position position="29"/>
    </location>
</feature>
<feature type="modified residue" description="Phosphoserine" evidence="1">
    <location>
        <position position="89"/>
    </location>
</feature>
<feature type="modified residue" description="Phosphoserine" evidence="3">
    <location>
        <position position="297"/>
    </location>
</feature>
<feature type="modified residue" description="Phosphoserine" evidence="10">
    <location>
        <position position="443"/>
    </location>
</feature>
<feature type="modified residue" description="Phosphothreonine" evidence="1">
    <location>
        <position position="444"/>
    </location>
</feature>
<feature type="modified residue" description="Phosphothreonine" evidence="1">
    <location>
        <position position="446"/>
    </location>
</feature>
<feature type="modified residue" description="N6-succinyllysine" evidence="3">
    <location>
        <position position="460"/>
    </location>
</feature>
<feature type="modified residue" description="Phosphoserine" evidence="1">
    <location>
        <position position="513"/>
    </location>
</feature>
<feature type="modified residue" description="N6-succinyllysine" evidence="3">
    <location>
        <position position="543"/>
    </location>
</feature>
<feature type="modified residue" description="N6-methyllysine" evidence="1">
    <location>
        <position position="558"/>
    </location>
</feature>
<feature type="modified residue" description="Phosphothreonine" evidence="10">
    <location>
        <position position="570"/>
    </location>
</feature>
<feature type="modified residue" description="N6-succinyllysine" evidence="3">
    <location>
        <position position="588"/>
    </location>
</feature>
<feature type="disulfide bond" evidence="4">
    <location>
        <begin position="77"/>
        <end position="86"/>
    </location>
</feature>
<feature type="disulfide bond" evidence="4">
    <location>
        <begin position="99"/>
        <end position="115"/>
    </location>
</feature>
<feature type="disulfide bond" evidence="4">
    <location>
        <begin position="114"/>
        <end position="125"/>
    </location>
</feature>
<feature type="disulfide bond" evidence="4">
    <location>
        <begin position="148"/>
        <end position="193"/>
    </location>
</feature>
<feature type="disulfide bond" evidence="4">
    <location>
        <begin position="192"/>
        <end position="201"/>
    </location>
</feature>
<feature type="disulfide bond" evidence="4">
    <location>
        <begin position="224"/>
        <end position="270"/>
    </location>
</feature>
<feature type="disulfide bond" evidence="4">
    <location>
        <begin position="269"/>
        <end position="277"/>
    </location>
</feature>
<feature type="disulfide bond" evidence="4">
    <location>
        <begin position="289"/>
        <end position="303"/>
    </location>
</feature>
<feature type="disulfide bond" evidence="4">
    <location>
        <begin position="302"/>
        <end position="313"/>
    </location>
</feature>
<feature type="disulfide bond" evidence="4">
    <location>
        <begin position="340"/>
        <end position="385"/>
    </location>
</feature>
<feature type="disulfide bond" evidence="4">
    <location>
        <begin position="384"/>
        <end position="393"/>
    </location>
</feature>
<feature type="disulfide bond" evidence="4">
    <location>
        <begin position="416"/>
        <end position="462"/>
    </location>
</feature>
<feature type="disulfide bond" evidence="4">
    <location>
        <begin position="461"/>
        <end position="472"/>
    </location>
</feature>
<feature type="disulfide bond" evidence="4">
    <location>
        <begin position="485"/>
        <end position="501"/>
    </location>
</feature>
<feature type="disulfide bond" evidence="4">
    <location>
        <begin position="500"/>
        <end position="511"/>
    </location>
</feature>
<feature type="disulfide bond" evidence="4">
    <location>
        <begin position="538"/>
        <end position="583"/>
    </location>
</feature>
<feature type="disulfide bond" evidence="4">
    <location>
        <begin position="582"/>
        <end position="591"/>
    </location>
</feature>
<feature type="sequence variant" evidence="5">
    <original>V</original>
    <variation>L</variation>
    <location>
        <position position="262"/>
    </location>
</feature>
<feature type="sequence conflict" description="In Ref. 6; AA sequence." evidence="8" ref="6">
    <original>Y</original>
    <variation>L</variation>
    <location>
        <position position="174"/>
    </location>
</feature>
<feature type="sequence conflict" description="In Ref. 1; CAA24532." evidence="8" ref="1">
    <original>I</original>
    <variation>T</variation>
    <location>
        <position position="317"/>
    </location>
</feature>
<feature type="sequence conflict" description="In Ref. 2; AAH85359." evidence="8" ref="2">
    <original>V</original>
    <variation>I</variation>
    <location>
        <position position="431"/>
    </location>
</feature>
<comment type="function">
    <text evidence="1 2">Binds water, Ca(2+), Na(+), K(+), fatty acids, hormones, bilirubin and drugs. Its main function is the regulation of the colloidal osmotic pressure of blood. Major zinc transporter in plasma, typically binds about 80% of all plasma zinc (By similarity). Major calcium and magnesium transporter in plasma, binds approximately 45% of circulating calcium and magnesium in plasma (By similarity). Potentially has more than two calcium-binding sites and might additionally bind calcium in a non-specific manner (By similarity). The shared binding site between zinc and calcium at residue Asp-273 suggests a crosstalk between zinc and calcium transport in the blood (By similarity). The rank order of affinity is zinc &gt; calcium &gt; magnesium (By similarity). Binds to the bacterial siderophore enterobactin and inhibits enterobactin-mediated iron uptake of E.coli from ferric transferrin, and may thereby limit the utilization of iron and growth of enteric bacteria such as E.coli (By similarity). Does not prevent iron uptake by the bacterial siderophore aerobactin (By similarity).</text>
</comment>
<comment type="subunit">
    <text evidence="1 3">Interacts with FCGRT; this interaction regulates ALB homeostasis (By similarity). Interacts with TASOR (By similarity). In plasma, occurs in a covalently-linked complex with chromophore-bound alpha-1-microglobulin; this interaction does not prevent fatty acid binding to ALB.</text>
</comment>
<comment type="subcellular location">
    <subcellularLocation>
        <location>Secreted</location>
    </subcellularLocation>
</comment>
<comment type="tissue specificity">
    <text>Plasma.</text>
</comment>
<comment type="PTM">
    <text evidence="1">Phosphorylated by FAM20C in the extracellular medium.</text>
</comment>
<comment type="similarity">
    <text evidence="4">Belongs to the ALB/AFP/VDB family.</text>
</comment>
<comment type="caution">
    <text evidence="9">A peptide arising from positions 166 to 174 was originally termed neurotensin-related peptide (NRP) and was thought to regulate fat digestion, lipid absorption, and blood flow.</text>
</comment>
<evidence type="ECO:0000250" key="1">
    <source>
        <dbReference type="UniProtKB" id="P02768"/>
    </source>
</evidence>
<evidence type="ECO:0000250" key="2">
    <source>
        <dbReference type="UniProtKB" id="P02769"/>
    </source>
</evidence>
<evidence type="ECO:0000250" key="3">
    <source>
        <dbReference type="UniProtKB" id="P07724"/>
    </source>
</evidence>
<evidence type="ECO:0000255" key="4">
    <source>
        <dbReference type="PROSITE-ProRule" id="PRU00769"/>
    </source>
</evidence>
<evidence type="ECO:0000269" key="5">
    <source>
    </source>
</evidence>
<evidence type="ECO:0000269" key="6">
    <source>
    </source>
</evidence>
<evidence type="ECO:0000269" key="7">
    <source>
    </source>
</evidence>
<evidence type="ECO:0000305" key="8"/>
<evidence type="ECO:0000305" key="9">
    <source>
    </source>
</evidence>
<evidence type="ECO:0007744" key="10">
    <source>
    </source>
</evidence>